<dbReference type="EC" id="3.6.1.31" evidence="1"/>
<dbReference type="EMBL" id="CP000227">
    <property type="protein sequence ID" value="ACM11913.1"/>
    <property type="molecule type" value="Genomic_DNA"/>
</dbReference>
<dbReference type="SMR" id="B9IV02"/>
<dbReference type="KEGG" id="bcq:BCQ_1485"/>
<dbReference type="HOGENOM" id="CLU_123337_0_0_9"/>
<dbReference type="UniPathway" id="UPA00031">
    <property type="reaction ID" value="UER00007"/>
</dbReference>
<dbReference type="Proteomes" id="UP000000441">
    <property type="component" value="Chromosome"/>
</dbReference>
<dbReference type="GO" id="GO:0005737">
    <property type="term" value="C:cytoplasm"/>
    <property type="evidence" value="ECO:0007669"/>
    <property type="project" value="UniProtKB-SubCell"/>
</dbReference>
<dbReference type="GO" id="GO:0005524">
    <property type="term" value="F:ATP binding"/>
    <property type="evidence" value="ECO:0007669"/>
    <property type="project" value="UniProtKB-KW"/>
</dbReference>
<dbReference type="GO" id="GO:0004636">
    <property type="term" value="F:phosphoribosyl-ATP diphosphatase activity"/>
    <property type="evidence" value="ECO:0007669"/>
    <property type="project" value="UniProtKB-UniRule"/>
</dbReference>
<dbReference type="GO" id="GO:0000105">
    <property type="term" value="P:L-histidine biosynthetic process"/>
    <property type="evidence" value="ECO:0007669"/>
    <property type="project" value="UniProtKB-UniRule"/>
</dbReference>
<dbReference type="CDD" id="cd11534">
    <property type="entry name" value="NTP-PPase_HisIE_like"/>
    <property type="match status" value="1"/>
</dbReference>
<dbReference type="Gene3D" id="1.10.287.1080">
    <property type="entry name" value="MazG-like"/>
    <property type="match status" value="1"/>
</dbReference>
<dbReference type="HAMAP" id="MF_01020">
    <property type="entry name" value="HisE"/>
    <property type="match status" value="1"/>
</dbReference>
<dbReference type="InterPro" id="IPR008179">
    <property type="entry name" value="HisE"/>
</dbReference>
<dbReference type="InterPro" id="IPR021130">
    <property type="entry name" value="PRib-ATP_PPHydrolase-like"/>
</dbReference>
<dbReference type="NCBIfam" id="TIGR03188">
    <property type="entry name" value="histidine_hisI"/>
    <property type="match status" value="1"/>
</dbReference>
<dbReference type="PANTHER" id="PTHR42945">
    <property type="entry name" value="HISTIDINE BIOSYNTHESIS BIFUNCTIONAL PROTEIN"/>
    <property type="match status" value="1"/>
</dbReference>
<dbReference type="PANTHER" id="PTHR42945:SF9">
    <property type="entry name" value="HISTIDINE BIOSYNTHESIS BIFUNCTIONAL PROTEIN HISIE"/>
    <property type="match status" value="1"/>
</dbReference>
<dbReference type="Pfam" id="PF01503">
    <property type="entry name" value="PRA-PH"/>
    <property type="match status" value="1"/>
</dbReference>
<dbReference type="SUPFAM" id="SSF101386">
    <property type="entry name" value="all-alpha NTP pyrophosphatases"/>
    <property type="match status" value="1"/>
</dbReference>
<comment type="catalytic activity">
    <reaction evidence="1">
        <text>1-(5-phospho-beta-D-ribosyl)-ATP + H2O = 1-(5-phospho-beta-D-ribosyl)-5'-AMP + diphosphate + H(+)</text>
        <dbReference type="Rhea" id="RHEA:22828"/>
        <dbReference type="ChEBI" id="CHEBI:15377"/>
        <dbReference type="ChEBI" id="CHEBI:15378"/>
        <dbReference type="ChEBI" id="CHEBI:33019"/>
        <dbReference type="ChEBI" id="CHEBI:59457"/>
        <dbReference type="ChEBI" id="CHEBI:73183"/>
        <dbReference type="EC" id="3.6.1.31"/>
    </reaction>
</comment>
<comment type="pathway">
    <text evidence="1">Amino-acid biosynthesis; L-histidine biosynthesis; L-histidine from 5-phospho-alpha-D-ribose 1-diphosphate: step 2/9.</text>
</comment>
<comment type="subcellular location">
    <subcellularLocation>
        <location evidence="1">Cytoplasm</location>
    </subcellularLocation>
</comment>
<comment type="similarity">
    <text evidence="1">Belongs to the PRA-PH family.</text>
</comment>
<keyword id="KW-0028">Amino-acid biosynthesis</keyword>
<keyword id="KW-0067">ATP-binding</keyword>
<keyword id="KW-0963">Cytoplasm</keyword>
<keyword id="KW-0368">Histidine biosynthesis</keyword>
<keyword id="KW-0378">Hydrolase</keyword>
<keyword id="KW-0547">Nucleotide-binding</keyword>
<organism>
    <name type="scientific">Bacillus cereus (strain Q1)</name>
    <dbReference type="NCBI Taxonomy" id="361100"/>
    <lineage>
        <taxon>Bacteria</taxon>
        <taxon>Bacillati</taxon>
        <taxon>Bacillota</taxon>
        <taxon>Bacilli</taxon>
        <taxon>Bacillales</taxon>
        <taxon>Bacillaceae</taxon>
        <taxon>Bacillus</taxon>
        <taxon>Bacillus cereus group</taxon>
    </lineage>
</organism>
<protein>
    <recommendedName>
        <fullName evidence="1">Phosphoribosyl-ATP pyrophosphatase</fullName>
        <shortName evidence="1">PRA-PH</shortName>
        <ecNumber evidence="1">3.6.1.31</ecNumber>
    </recommendedName>
</protein>
<proteinExistence type="inferred from homology"/>
<sequence>MKNAFTLLFETIKERKRNPLSESYTNYLFLKGEDKILKKIGEECSEVIIASKNNDKEELVKEMVDVLYHCFVLLVEKNISLEDIMEEVTERNGKLSRVGDRREIDTL</sequence>
<feature type="chain" id="PRO_1000149046" description="Phosphoribosyl-ATP pyrophosphatase">
    <location>
        <begin position="1"/>
        <end position="107"/>
    </location>
</feature>
<evidence type="ECO:0000255" key="1">
    <source>
        <dbReference type="HAMAP-Rule" id="MF_01020"/>
    </source>
</evidence>
<accession>B9IV02</accession>
<reference key="1">
    <citation type="journal article" date="2009" name="J. Bacteriol.">
        <title>Complete genome sequence of the extremophilic Bacillus cereus strain Q1 with industrial applications.</title>
        <authorList>
            <person name="Xiong Z."/>
            <person name="Jiang Y."/>
            <person name="Qi D."/>
            <person name="Lu H."/>
            <person name="Yang F."/>
            <person name="Yang J."/>
            <person name="Chen L."/>
            <person name="Sun L."/>
            <person name="Xu X."/>
            <person name="Xue Y."/>
            <person name="Zhu Y."/>
            <person name="Jin Q."/>
        </authorList>
    </citation>
    <scope>NUCLEOTIDE SEQUENCE [LARGE SCALE GENOMIC DNA]</scope>
    <source>
        <strain>Q1</strain>
    </source>
</reference>
<name>HIS2_BACCQ</name>
<gene>
    <name evidence="1" type="primary">hisE</name>
    <name type="ordered locus">BCQ_1485</name>
</gene>